<feature type="chain" id="PRO_0000170553" description="Guanylate kinase">
    <location>
        <begin position="1"/>
        <end position="209"/>
    </location>
</feature>
<feature type="domain" description="Guanylate kinase-like" evidence="1">
    <location>
        <begin position="7"/>
        <end position="185"/>
    </location>
</feature>
<feature type="binding site" evidence="1">
    <location>
        <begin position="14"/>
        <end position="21"/>
    </location>
    <ligand>
        <name>ATP</name>
        <dbReference type="ChEBI" id="CHEBI:30616"/>
    </ligand>
</feature>
<gene>
    <name evidence="1" type="primary">gmk</name>
    <name type="ordered locus">lpp1992</name>
</gene>
<evidence type="ECO:0000255" key="1">
    <source>
        <dbReference type="HAMAP-Rule" id="MF_00328"/>
    </source>
</evidence>
<keyword id="KW-0067">ATP-binding</keyword>
<keyword id="KW-0963">Cytoplasm</keyword>
<keyword id="KW-0418">Kinase</keyword>
<keyword id="KW-0547">Nucleotide-binding</keyword>
<keyword id="KW-0808">Transferase</keyword>
<reference key="1">
    <citation type="journal article" date="2004" name="Nat. Genet.">
        <title>Evidence in the Legionella pneumophila genome for exploitation of host cell functions and high genome plasticity.</title>
        <authorList>
            <person name="Cazalet C."/>
            <person name="Rusniok C."/>
            <person name="Brueggemann H."/>
            <person name="Zidane N."/>
            <person name="Magnier A."/>
            <person name="Ma L."/>
            <person name="Tichit M."/>
            <person name="Jarraud S."/>
            <person name="Bouchier C."/>
            <person name="Vandenesch F."/>
            <person name="Kunst F."/>
            <person name="Etienne J."/>
            <person name="Glaser P."/>
            <person name="Buchrieser C."/>
        </authorList>
    </citation>
    <scope>NUCLEOTIDE SEQUENCE [LARGE SCALE GENOMIC DNA]</scope>
    <source>
        <strain>Paris</strain>
    </source>
</reference>
<accession>Q5X3P2</accession>
<organism>
    <name type="scientific">Legionella pneumophila (strain Paris)</name>
    <dbReference type="NCBI Taxonomy" id="297246"/>
    <lineage>
        <taxon>Bacteria</taxon>
        <taxon>Pseudomonadati</taxon>
        <taxon>Pseudomonadota</taxon>
        <taxon>Gammaproteobacteria</taxon>
        <taxon>Legionellales</taxon>
        <taxon>Legionellaceae</taxon>
        <taxon>Legionella</taxon>
    </lineage>
</organism>
<comment type="function">
    <text evidence="1">Essential for recycling GMP and indirectly, cGMP.</text>
</comment>
<comment type="catalytic activity">
    <reaction evidence="1">
        <text>GMP + ATP = GDP + ADP</text>
        <dbReference type="Rhea" id="RHEA:20780"/>
        <dbReference type="ChEBI" id="CHEBI:30616"/>
        <dbReference type="ChEBI" id="CHEBI:58115"/>
        <dbReference type="ChEBI" id="CHEBI:58189"/>
        <dbReference type="ChEBI" id="CHEBI:456216"/>
        <dbReference type="EC" id="2.7.4.8"/>
    </reaction>
</comment>
<comment type="subcellular location">
    <subcellularLocation>
        <location evidence="1">Cytoplasm</location>
    </subcellularLocation>
</comment>
<comment type="similarity">
    <text evidence="1">Belongs to the guanylate kinase family.</text>
</comment>
<proteinExistence type="inferred from homology"/>
<protein>
    <recommendedName>
        <fullName evidence="1">Guanylate kinase</fullName>
        <ecNumber evidence="1">2.7.4.8</ecNumber>
    </recommendedName>
    <alternativeName>
        <fullName evidence="1">GMP kinase</fullName>
    </alternativeName>
</protein>
<sequence length="209" mass="23766">MVSDNSGNLYIVAAPSGGGKTSLVKKLIEMVGEIEVSVSHTTRPMRPGEKEGVDYFFIDEEQFISMVNEGAFIEHAKVFNHWYGTSVAQINKRLQFGIDVVLDIDWQGAEQIRHSYPDAVSVFIIPPSLDTLKERLMNRRQDKDNVISERMTKAQDELGHYPEFDYLIVNDDFEKAAMELQSIVIANRLRIEKQVNKQAKLLSFLLSSQ</sequence>
<dbReference type="EC" id="2.7.4.8" evidence="1"/>
<dbReference type="EMBL" id="CR628336">
    <property type="protein sequence ID" value="CAH13144.1"/>
    <property type="molecule type" value="Genomic_DNA"/>
</dbReference>
<dbReference type="RefSeq" id="WP_011214259.1">
    <property type="nucleotide sequence ID" value="NC_006368.1"/>
</dbReference>
<dbReference type="SMR" id="Q5X3P2"/>
<dbReference type="KEGG" id="lpp:lpp1992"/>
<dbReference type="LegioList" id="lpp1992"/>
<dbReference type="HOGENOM" id="CLU_001715_1_2_6"/>
<dbReference type="GO" id="GO:0005829">
    <property type="term" value="C:cytosol"/>
    <property type="evidence" value="ECO:0007669"/>
    <property type="project" value="TreeGrafter"/>
</dbReference>
<dbReference type="GO" id="GO:0005524">
    <property type="term" value="F:ATP binding"/>
    <property type="evidence" value="ECO:0007669"/>
    <property type="project" value="UniProtKB-UniRule"/>
</dbReference>
<dbReference type="GO" id="GO:0004385">
    <property type="term" value="F:guanylate kinase activity"/>
    <property type="evidence" value="ECO:0007669"/>
    <property type="project" value="UniProtKB-UniRule"/>
</dbReference>
<dbReference type="CDD" id="cd00071">
    <property type="entry name" value="GMPK"/>
    <property type="match status" value="1"/>
</dbReference>
<dbReference type="FunFam" id="3.40.50.300:FF:000084">
    <property type="entry name" value="Guanylate kinase"/>
    <property type="match status" value="1"/>
</dbReference>
<dbReference type="FunFam" id="3.30.63.10:FF:000002">
    <property type="entry name" value="Guanylate kinase 1"/>
    <property type="match status" value="1"/>
</dbReference>
<dbReference type="Gene3D" id="3.30.63.10">
    <property type="entry name" value="Guanylate Kinase phosphate binding domain"/>
    <property type="match status" value="1"/>
</dbReference>
<dbReference type="Gene3D" id="3.40.50.300">
    <property type="entry name" value="P-loop containing nucleotide triphosphate hydrolases"/>
    <property type="match status" value="1"/>
</dbReference>
<dbReference type="HAMAP" id="MF_00328">
    <property type="entry name" value="Guanylate_kinase"/>
    <property type="match status" value="1"/>
</dbReference>
<dbReference type="InterPro" id="IPR008145">
    <property type="entry name" value="GK/Ca_channel_bsu"/>
</dbReference>
<dbReference type="InterPro" id="IPR008144">
    <property type="entry name" value="Guanylate_kin-like_dom"/>
</dbReference>
<dbReference type="InterPro" id="IPR017665">
    <property type="entry name" value="Guanylate_kinase"/>
</dbReference>
<dbReference type="InterPro" id="IPR020590">
    <property type="entry name" value="Guanylate_kinase_CS"/>
</dbReference>
<dbReference type="InterPro" id="IPR027417">
    <property type="entry name" value="P-loop_NTPase"/>
</dbReference>
<dbReference type="NCBIfam" id="TIGR03263">
    <property type="entry name" value="guanyl_kin"/>
    <property type="match status" value="1"/>
</dbReference>
<dbReference type="PANTHER" id="PTHR23117:SF13">
    <property type="entry name" value="GUANYLATE KINASE"/>
    <property type="match status" value="1"/>
</dbReference>
<dbReference type="PANTHER" id="PTHR23117">
    <property type="entry name" value="GUANYLATE KINASE-RELATED"/>
    <property type="match status" value="1"/>
</dbReference>
<dbReference type="Pfam" id="PF00625">
    <property type="entry name" value="Guanylate_kin"/>
    <property type="match status" value="1"/>
</dbReference>
<dbReference type="SMART" id="SM00072">
    <property type="entry name" value="GuKc"/>
    <property type="match status" value="1"/>
</dbReference>
<dbReference type="SUPFAM" id="SSF52540">
    <property type="entry name" value="P-loop containing nucleoside triphosphate hydrolases"/>
    <property type="match status" value="1"/>
</dbReference>
<dbReference type="PROSITE" id="PS00856">
    <property type="entry name" value="GUANYLATE_KINASE_1"/>
    <property type="match status" value="1"/>
</dbReference>
<dbReference type="PROSITE" id="PS50052">
    <property type="entry name" value="GUANYLATE_KINASE_2"/>
    <property type="match status" value="1"/>
</dbReference>
<name>KGUA_LEGPA</name>